<proteinExistence type="inferred from homology"/>
<feature type="chain" id="PRO_0000161212" description="Elongation factor Ts">
    <location>
        <begin position="1"/>
        <end position="346"/>
    </location>
</feature>
<feature type="region of interest" description="Involved in Mg(2+) ion dislocation from EF-Tu" evidence="1">
    <location>
        <begin position="80"/>
        <end position="83"/>
    </location>
</feature>
<sequence>MAEITAKLVKELREKSGAGVMDAKKALVETDGDMDKAVELLREKGMAKAAKKADRVAAEGLTGVYVHGNVAAVVEVNAETDFVAKNAQFVELVNATAKVIAEGKPANNDEALALVMPSGETLAEAYVNATATIGEKISFRRFALIEKTDEQHFGAYQHNGGRIGVISVVEGGDDALAKQVSMHIAAMKPTVLSYTELDAQFIKDELAQLNHAIELDNESRAMVDKPALPFLKYGSKAQLSDDVITAAEADIKAELAAEGKPEKIWDKIIPGKMDRFMLDNTKVDQAYTLLAQVYIMDDSKTVEAYLDSVNAKAIAFARFEVGEGIEKKANDFESEVAATMAAALNN</sequence>
<gene>
    <name evidence="1" type="primary">tsf</name>
    <name type="ordered locus">M6_Spy1780</name>
</gene>
<evidence type="ECO:0000255" key="1">
    <source>
        <dbReference type="HAMAP-Rule" id="MF_00050"/>
    </source>
</evidence>
<evidence type="ECO:0000305" key="2"/>
<accession>Q5X9J8</accession>
<organism>
    <name type="scientific">Streptococcus pyogenes serotype M6 (strain ATCC BAA-946 / MGAS10394)</name>
    <dbReference type="NCBI Taxonomy" id="286636"/>
    <lineage>
        <taxon>Bacteria</taxon>
        <taxon>Bacillati</taxon>
        <taxon>Bacillota</taxon>
        <taxon>Bacilli</taxon>
        <taxon>Lactobacillales</taxon>
        <taxon>Streptococcaceae</taxon>
        <taxon>Streptococcus</taxon>
    </lineage>
</organism>
<comment type="function">
    <text evidence="1">Associates with the EF-Tu.GDP complex and induces the exchange of GDP to GTP. It remains bound to the aminoacyl-tRNA.EF-Tu.GTP complex up to the GTP hydrolysis stage on the ribosome.</text>
</comment>
<comment type="subcellular location">
    <subcellularLocation>
        <location evidence="1">Cytoplasm</location>
    </subcellularLocation>
</comment>
<comment type="similarity">
    <text evidence="1">Belongs to the EF-Ts family.</text>
</comment>
<comment type="sequence caution" evidence="2">
    <conflict type="erroneous initiation">
        <sequence resource="EMBL-CDS" id="AAT87915"/>
    </conflict>
</comment>
<reference key="1">
    <citation type="journal article" date="2004" name="J. Infect. Dis.">
        <title>Progress toward characterization of the group A Streptococcus metagenome: complete genome sequence of a macrolide-resistant serotype M6 strain.</title>
        <authorList>
            <person name="Banks D.J."/>
            <person name="Porcella S.F."/>
            <person name="Barbian K.D."/>
            <person name="Beres S.B."/>
            <person name="Philips L.E."/>
            <person name="Voyich J.M."/>
            <person name="DeLeo F.R."/>
            <person name="Martin J.M."/>
            <person name="Somerville G.A."/>
            <person name="Musser J.M."/>
        </authorList>
    </citation>
    <scope>NUCLEOTIDE SEQUENCE [LARGE SCALE GENOMIC DNA]</scope>
    <source>
        <strain>ATCC BAA-946 / MGAS10394</strain>
    </source>
</reference>
<protein>
    <recommendedName>
        <fullName evidence="1">Elongation factor Ts</fullName>
        <shortName evidence="1">EF-Ts</shortName>
    </recommendedName>
</protein>
<name>EFTS_STRP6</name>
<keyword id="KW-0963">Cytoplasm</keyword>
<keyword id="KW-0251">Elongation factor</keyword>
<keyword id="KW-0648">Protein biosynthesis</keyword>
<dbReference type="EMBL" id="CP000003">
    <property type="protein sequence ID" value="AAT87915.1"/>
    <property type="status" value="ALT_INIT"/>
    <property type="molecule type" value="Genomic_DNA"/>
</dbReference>
<dbReference type="RefSeq" id="WP_002982258.1">
    <property type="nucleotide sequence ID" value="NC_006086.1"/>
</dbReference>
<dbReference type="SMR" id="Q5X9J8"/>
<dbReference type="GeneID" id="69901553"/>
<dbReference type="KEGG" id="spa:M6_Spy1780"/>
<dbReference type="HOGENOM" id="CLU_047155_0_1_9"/>
<dbReference type="Proteomes" id="UP000001167">
    <property type="component" value="Chromosome"/>
</dbReference>
<dbReference type="GO" id="GO:0005737">
    <property type="term" value="C:cytoplasm"/>
    <property type="evidence" value="ECO:0007669"/>
    <property type="project" value="UniProtKB-SubCell"/>
</dbReference>
<dbReference type="GO" id="GO:0003746">
    <property type="term" value="F:translation elongation factor activity"/>
    <property type="evidence" value="ECO:0007669"/>
    <property type="project" value="UniProtKB-UniRule"/>
</dbReference>
<dbReference type="CDD" id="cd14275">
    <property type="entry name" value="UBA_EF-Ts"/>
    <property type="match status" value="1"/>
</dbReference>
<dbReference type="FunFam" id="1.10.286.20:FF:000004">
    <property type="entry name" value="Elongation factor Ts"/>
    <property type="match status" value="1"/>
</dbReference>
<dbReference type="FunFam" id="1.10.8.10:FF:000001">
    <property type="entry name" value="Elongation factor Ts"/>
    <property type="match status" value="1"/>
</dbReference>
<dbReference type="FunFam" id="3.30.479.20:FF:000013">
    <property type="entry name" value="Elongation factor Ts"/>
    <property type="match status" value="1"/>
</dbReference>
<dbReference type="Gene3D" id="1.10.286.20">
    <property type="match status" value="1"/>
</dbReference>
<dbReference type="Gene3D" id="1.10.8.10">
    <property type="entry name" value="DNA helicase RuvA subunit, C-terminal domain"/>
    <property type="match status" value="1"/>
</dbReference>
<dbReference type="Gene3D" id="3.30.479.20">
    <property type="entry name" value="Elongation factor Ts, dimerisation domain"/>
    <property type="match status" value="2"/>
</dbReference>
<dbReference type="HAMAP" id="MF_00050">
    <property type="entry name" value="EF_Ts"/>
    <property type="match status" value="1"/>
</dbReference>
<dbReference type="InterPro" id="IPR036402">
    <property type="entry name" value="EF-Ts_dimer_sf"/>
</dbReference>
<dbReference type="InterPro" id="IPR001816">
    <property type="entry name" value="Transl_elong_EFTs/EF1B"/>
</dbReference>
<dbReference type="InterPro" id="IPR014039">
    <property type="entry name" value="Transl_elong_EFTs/EF1B_dimer"/>
</dbReference>
<dbReference type="InterPro" id="IPR018101">
    <property type="entry name" value="Transl_elong_Ts_CS"/>
</dbReference>
<dbReference type="InterPro" id="IPR009060">
    <property type="entry name" value="UBA-like_sf"/>
</dbReference>
<dbReference type="NCBIfam" id="TIGR00116">
    <property type="entry name" value="tsf"/>
    <property type="match status" value="1"/>
</dbReference>
<dbReference type="PANTHER" id="PTHR11741">
    <property type="entry name" value="ELONGATION FACTOR TS"/>
    <property type="match status" value="1"/>
</dbReference>
<dbReference type="PANTHER" id="PTHR11741:SF0">
    <property type="entry name" value="ELONGATION FACTOR TS, MITOCHONDRIAL"/>
    <property type="match status" value="1"/>
</dbReference>
<dbReference type="Pfam" id="PF00889">
    <property type="entry name" value="EF_TS"/>
    <property type="match status" value="1"/>
</dbReference>
<dbReference type="SUPFAM" id="SSF54713">
    <property type="entry name" value="Elongation factor Ts (EF-Ts), dimerisation domain"/>
    <property type="match status" value="1"/>
</dbReference>
<dbReference type="SUPFAM" id="SSF46934">
    <property type="entry name" value="UBA-like"/>
    <property type="match status" value="1"/>
</dbReference>
<dbReference type="PROSITE" id="PS01126">
    <property type="entry name" value="EF_TS_1"/>
    <property type="match status" value="1"/>
</dbReference>
<dbReference type="PROSITE" id="PS01127">
    <property type="entry name" value="EF_TS_2"/>
    <property type="match status" value="1"/>
</dbReference>